<feature type="chain" id="PRO_0000182174" description="UDP-N-acetylmuramate--L-alanine ligase">
    <location>
        <begin position="1"/>
        <end position="478"/>
    </location>
</feature>
<feature type="sequence conflict" description="In Ref. 2; AAB47522." evidence="2" ref="2">
    <original>L</original>
    <variation>F</variation>
    <location>
        <position position="243"/>
    </location>
</feature>
<feature type="sequence conflict" description="In Ref. 2; AAB47522." evidence="2" ref="2">
    <original>L</original>
    <variation>M</variation>
    <location>
        <position position="282"/>
    </location>
</feature>
<proteinExistence type="inferred from homology"/>
<keyword id="KW-0067">ATP-binding</keyword>
<keyword id="KW-0131">Cell cycle</keyword>
<keyword id="KW-0132">Cell division</keyword>
<keyword id="KW-0133">Cell shape</keyword>
<keyword id="KW-0961">Cell wall biogenesis/degradation</keyword>
<keyword id="KW-0963">Cytoplasm</keyword>
<keyword id="KW-0436">Ligase</keyword>
<keyword id="KW-0547">Nucleotide-binding</keyword>
<keyword id="KW-0573">Peptidoglycan synthesis</keyword>
<keyword id="KW-1185">Reference proteome</keyword>
<comment type="function">
    <text evidence="1">Cell wall formation.</text>
</comment>
<comment type="catalytic activity">
    <reaction>
        <text>UDP-N-acetyl-alpha-D-muramate + L-alanine + ATP = UDP-N-acetyl-alpha-D-muramoyl-L-alanine + ADP + phosphate + H(+)</text>
        <dbReference type="Rhea" id="RHEA:23372"/>
        <dbReference type="ChEBI" id="CHEBI:15378"/>
        <dbReference type="ChEBI" id="CHEBI:30616"/>
        <dbReference type="ChEBI" id="CHEBI:43474"/>
        <dbReference type="ChEBI" id="CHEBI:57972"/>
        <dbReference type="ChEBI" id="CHEBI:70757"/>
        <dbReference type="ChEBI" id="CHEBI:83898"/>
        <dbReference type="ChEBI" id="CHEBI:456216"/>
        <dbReference type="EC" id="6.3.2.8"/>
    </reaction>
</comment>
<comment type="pathway">
    <text>Cell wall biogenesis; peptidoglycan biosynthesis.</text>
</comment>
<comment type="subcellular location">
    <subcellularLocation>
        <location evidence="1">Cytoplasm</location>
    </subcellularLocation>
</comment>
<comment type="similarity">
    <text evidence="2">Belongs to the MurCDEF family.</text>
</comment>
<evidence type="ECO:0000250" key="1"/>
<evidence type="ECO:0000305" key="2"/>
<protein>
    <recommendedName>
        <fullName>UDP-N-acetylmuramate--L-alanine ligase</fullName>
        <ecNumber>6.3.2.8</ecNumber>
    </recommendedName>
    <alternativeName>
        <fullName>UDP-N-acetylmuramoyl-L-alanine synthetase</fullName>
    </alternativeName>
</protein>
<accession>P95836</accession>
<accession>Q31ME8</accession>
<sequence length="478" mass="51605">MTIAVDLQGRPFHFIGIGGIGMSALAQVVTERQLPVSGSDIRRSHITDRLAQLGAQIFDRQAATNLEFFQEAVSAGQSPQVICSTAIHAHNEEYQAAIDLGCPVFHRSDLLAALLRVYESIAVAGTHGKTTTSGLIAYLLYQAGLDPTVVIGGEVNALGGNARLGQGRHLVAEADESDGSLVKLQAAIGIITNIELDHPDHYCDLEAVISTFKTFSDNCSQLIANWDCPTVRDRLPGTISYSLDPARGADYTVDQVSFRGSGTQARIWERGELLGRIHLPLLEAHNLSNALAAIAACRHLGMDFASIREGLAGFEGARRRFEFRGSAQGIQFVDDYAHHPSELAATLAAARLQIDSGCSRLPEVPKRLVAIFQPHRYSRTQAFLAEFAQSFGPADLVLISDIYAAGERNPGQLSGQTLADAIAQYQANVHYAPDLEAVEQRLHQLLQPGDLALFLGAGNLNQVIPRLLDHYACDRSAA</sequence>
<reference key="1">
    <citation type="submission" date="2005-08" db="EMBL/GenBank/DDBJ databases">
        <title>Complete sequence of chromosome 1 of Synechococcus elongatus PCC 7942.</title>
        <authorList>
            <consortium name="US DOE Joint Genome Institute"/>
            <person name="Copeland A."/>
            <person name="Lucas S."/>
            <person name="Lapidus A."/>
            <person name="Barry K."/>
            <person name="Detter J.C."/>
            <person name="Glavina T."/>
            <person name="Hammon N."/>
            <person name="Israni S."/>
            <person name="Pitluck S."/>
            <person name="Schmutz J."/>
            <person name="Larimer F."/>
            <person name="Land M."/>
            <person name="Kyrpides N."/>
            <person name="Lykidis A."/>
            <person name="Golden S."/>
            <person name="Richardson P."/>
        </authorList>
    </citation>
    <scope>NUCLEOTIDE SEQUENCE [LARGE SCALE GENOMIC DNA]</scope>
    <source>
        <strain>ATCC 33912 / PCC 7942 / FACHB-805</strain>
    </source>
</reference>
<reference key="2">
    <citation type="submission" date="1997-01" db="EMBL/GenBank/DDBJ databases">
        <title>Cyanobacterial mutants capable of growing in the presence of high concentration of zinc.</title>
        <authorList>
            <person name="Kirzner S."/>
            <person name="Kaplan A."/>
        </authorList>
    </citation>
    <scope>NUCLEOTIDE SEQUENCE [GENOMIC DNA] OF 199-478</scope>
</reference>
<name>MURC_SYNE7</name>
<dbReference type="EC" id="6.3.2.8"/>
<dbReference type="EMBL" id="CP000100">
    <property type="protein sequence ID" value="ABB57771.1"/>
    <property type="molecule type" value="Genomic_DNA"/>
</dbReference>
<dbReference type="EMBL" id="U86147">
    <property type="protein sequence ID" value="AAB47522.1"/>
    <property type="molecule type" value="Genomic_DNA"/>
</dbReference>
<dbReference type="RefSeq" id="WP_011244660.1">
    <property type="nucleotide sequence ID" value="NZ_JACJTX010000001.1"/>
</dbReference>
<dbReference type="SMR" id="P95836"/>
<dbReference type="STRING" id="1140.Synpcc7942_1741"/>
<dbReference type="PaxDb" id="1140-Synpcc7942_1741"/>
<dbReference type="GeneID" id="72430612"/>
<dbReference type="KEGG" id="syf:Synpcc7942_1741"/>
<dbReference type="eggNOG" id="COG0773">
    <property type="taxonomic scope" value="Bacteria"/>
</dbReference>
<dbReference type="HOGENOM" id="CLU_028104_2_2_3"/>
<dbReference type="OrthoDB" id="9804126at2"/>
<dbReference type="BioCyc" id="SYNEL:SYNPCC7942_1741-MONOMER"/>
<dbReference type="UniPathway" id="UPA00219"/>
<dbReference type="Proteomes" id="UP000889800">
    <property type="component" value="Chromosome"/>
</dbReference>
<dbReference type="GO" id="GO:0005737">
    <property type="term" value="C:cytoplasm"/>
    <property type="evidence" value="ECO:0007669"/>
    <property type="project" value="UniProtKB-SubCell"/>
</dbReference>
<dbReference type="GO" id="GO:0005524">
    <property type="term" value="F:ATP binding"/>
    <property type="evidence" value="ECO:0007669"/>
    <property type="project" value="UniProtKB-UniRule"/>
</dbReference>
<dbReference type="GO" id="GO:0008763">
    <property type="term" value="F:UDP-N-acetylmuramate-L-alanine ligase activity"/>
    <property type="evidence" value="ECO:0007669"/>
    <property type="project" value="UniProtKB-UniRule"/>
</dbReference>
<dbReference type="GO" id="GO:0051301">
    <property type="term" value="P:cell division"/>
    <property type="evidence" value="ECO:0007669"/>
    <property type="project" value="UniProtKB-KW"/>
</dbReference>
<dbReference type="GO" id="GO:0071555">
    <property type="term" value="P:cell wall organization"/>
    <property type="evidence" value="ECO:0007669"/>
    <property type="project" value="UniProtKB-KW"/>
</dbReference>
<dbReference type="GO" id="GO:0009252">
    <property type="term" value="P:peptidoglycan biosynthetic process"/>
    <property type="evidence" value="ECO:0007669"/>
    <property type="project" value="UniProtKB-UniRule"/>
</dbReference>
<dbReference type="GO" id="GO:0008360">
    <property type="term" value="P:regulation of cell shape"/>
    <property type="evidence" value="ECO:0007669"/>
    <property type="project" value="UniProtKB-KW"/>
</dbReference>
<dbReference type="Gene3D" id="3.90.190.20">
    <property type="entry name" value="Mur ligase, C-terminal domain"/>
    <property type="match status" value="1"/>
</dbReference>
<dbReference type="Gene3D" id="3.40.1190.10">
    <property type="entry name" value="Mur-like, catalytic domain"/>
    <property type="match status" value="1"/>
</dbReference>
<dbReference type="Gene3D" id="3.40.50.720">
    <property type="entry name" value="NAD(P)-binding Rossmann-like Domain"/>
    <property type="match status" value="1"/>
</dbReference>
<dbReference type="HAMAP" id="MF_00046">
    <property type="entry name" value="MurC"/>
    <property type="match status" value="1"/>
</dbReference>
<dbReference type="InterPro" id="IPR036565">
    <property type="entry name" value="Mur-like_cat_sf"/>
</dbReference>
<dbReference type="InterPro" id="IPR004101">
    <property type="entry name" value="Mur_ligase_C"/>
</dbReference>
<dbReference type="InterPro" id="IPR036615">
    <property type="entry name" value="Mur_ligase_C_dom_sf"/>
</dbReference>
<dbReference type="InterPro" id="IPR013221">
    <property type="entry name" value="Mur_ligase_cen"/>
</dbReference>
<dbReference type="InterPro" id="IPR000713">
    <property type="entry name" value="Mur_ligase_N"/>
</dbReference>
<dbReference type="InterPro" id="IPR050061">
    <property type="entry name" value="MurCDEF_pg_biosynth"/>
</dbReference>
<dbReference type="InterPro" id="IPR005758">
    <property type="entry name" value="UDP-N-AcMur_Ala_ligase_MurC"/>
</dbReference>
<dbReference type="NCBIfam" id="TIGR01082">
    <property type="entry name" value="murC"/>
    <property type="match status" value="1"/>
</dbReference>
<dbReference type="PANTHER" id="PTHR43445:SF3">
    <property type="entry name" value="UDP-N-ACETYLMURAMATE--L-ALANINE LIGASE"/>
    <property type="match status" value="1"/>
</dbReference>
<dbReference type="PANTHER" id="PTHR43445">
    <property type="entry name" value="UDP-N-ACETYLMURAMATE--L-ALANINE LIGASE-RELATED"/>
    <property type="match status" value="1"/>
</dbReference>
<dbReference type="Pfam" id="PF01225">
    <property type="entry name" value="Mur_ligase"/>
    <property type="match status" value="1"/>
</dbReference>
<dbReference type="Pfam" id="PF02875">
    <property type="entry name" value="Mur_ligase_C"/>
    <property type="match status" value="1"/>
</dbReference>
<dbReference type="Pfam" id="PF08245">
    <property type="entry name" value="Mur_ligase_M"/>
    <property type="match status" value="1"/>
</dbReference>
<dbReference type="SUPFAM" id="SSF51984">
    <property type="entry name" value="MurCD N-terminal domain"/>
    <property type="match status" value="1"/>
</dbReference>
<dbReference type="SUPFAM" id="SSF53623">
    <property type="entry name" value="MurD-like peptide ligases, catalytic domain"/>
    <property type="match status" value="1"/>
</dbReference>
<dbReference type="SUPFAM" id="SSF53244">
    <property type="entry name" value="MurD-like peptide ligases, peptide-binding domain"/>
    <property type="match status" value="1"/>
</dbReference>
<organism>
    <name type="scientific">Synechococcus elongatus (strain ATCC 33912 / PCC 7942 / FACHB-805)</name>
    <name type="common">Anacystis nidulans R2</name>
    <dbReference type="NCBI Taxonomy" id="1140"/>
    <lineage>
        <taxon>Bacteria</taxon>
        <taxon>Bacillati</taxon>
        <taxon>Cyanobacteriota</taxon>
        <taxon>Cyanophyceae</taxon>
        <taxon>Synechococcales</taxon>
        <taxon>Synechococcaceae</taxon>
        <taxon>Synechococcus</taxon>
    </lineage>
</organism>
<gene>
    <name type="primary">murC</name>
    <name type="ordered locus">Synpcc7942_1741</name>
</gene>